<evidence type="ECO:0000250" key="1"/>
<evidence type="ECO:0000255" key="2"/>
<evidence type="ECO:0000305" key="3"/>
<geneLocation type="mitochondrion"/>
<gene>
    <name type="primary">ND4</name>
</gene>
<protein>
    <recommendedName>
        <fullName>NADH-ubiquinone oxidoreductase chain 4</fullName>
        <ecNumber>7.1.1.2</ecNumber>
    </recommendedName>
    <alternativeName>
        <fullName>NADH dehydrogenase subunit 4</fullName>
    </alternativeName>
</protein>
<name>NU4M_CERCA</name>
<accession>Q34048</accession>
<accession>Q34053</accession>
<keyword id="KW-0249">Electron transport</keyword>
<keyword id="KW-0472">Membrane</keyword>
<keyword id="KW-0496">Mitochondrion</keyword>
<keyword id="KW-0520">NAD</keyword>
<keyword id="KW-0679">Respiratory chain</keyword>
<keyword id="KW-1278">Translocase</keyword>
<keyword id="KW-0812">Transmembrane</keyword>
<keyword id="KW-1133">Transmembrane helix</keyword>
<keyword id="KW-0813">Transport</keyword>
<keyword id="KW-0830">Ubiquinone</keyword>
<dbReference type="EC" id="7.1.1.2"/>
<dbReference type="EMBL" id="U12925">
    <property type="protein sequence ID" value="AAA85797.1"/>
    <property type="molecule type" value="Genomic_DNA"/>
</dbReference>
<dbReference type="EMBL" id="U12924">
    <property type="protein sequence ID" value="AAA85796.1"/>
    <property type="molecule type" value="Genomic_DNA"/>
</dbReference>
<dbReference type="SMR" id="Q34048"/>
<dbReference type="OrthoDB" id="7855711at2759"/>
<dbReference type="GO" id="GO:0031966">
    <property type="term" value="C:mitochondrial membrane"/>
    <property type="evidence" value="ECO:0007669"/>
    <property type="project" value="UniProtKB-SubCell"/>
</dbReference>
<dbReference type="GO" id="GO:0008137">
    <property type="term" value="F:NADH dehydrogenase (ubiquinone) activity"/>
    <property type="evidence" value="ECO:0007669"/>
    <property type="project" value="UniProtKB-EC"/>
</dbReference>
<dbReference type="GO" id="GO:0048039">
    <property type="term" value="F:ubiquinone binding"/>
    <property type="evidence" value="ECO:0007669"/>
    <property type="project" value="TreeGrafter"/>
</dbReference>
<dbReference type="GO" id="GO:0042773">
    <property type="term" value="P:ATP synthesis coupled electron transport"/>
    <property type="evidence" value="ECO:0007669"/>
    <property type="project" value="InterPro"/>
</dbReference>
<dbReference type="GO" id="GO:0015990">
    <property type="term" value="P:electron transport coupled proton transport"/>
    <property type="evidence" value="ECO:0007669"/>
    <property type="project" value="TreeGrafter"/>
</dbReference>
<dbReference type="InterPro" id="IPR000260">
    <property type="entry name" value="NADH4_N"/>
</dbReference>
<dbReference type="InterPro" id="IPR003918">
    <property type="entry name" value="NADH_UbQ_OxRdtase"/>
</dbReference>
<dbReference type="InterPro" id="IPR001750">
    <property type="entry name" value="ND/Mrp_TM"/>
</dbReference>
<dbReference type="PANTHER" id="PTHR43507">
    <property type="entry name" value="NADH-UBIQUINONE OXIDOREDUCTASE CHAIN 4"/>
    <property type="match status" value="1"/>
</dbReference>
<dbReference type="PANTHER" id="PTHR43507:SF20">
    <property type="entry name" value="NADH-UBIQUINONE OXIDOREDUCTASE CHAIN 4"/>
    <property type="match status" value="1"/>
</dbReference>
<dbReference type="Pfam" id="PF01059">
    <property type="entry name" value="Oxidored_q5_N"/>
    <property type="match status" value="1"/>
</dbReference>
<dbReference type="Pfam" id="PF00361">
    <property type="entry name" value="Proton_antipo_M"/>
    <property type="match status" value="1"/>
</dbReference>
<dbReference type="PRINTS" id="PR01437">
    <property type="entry name" value="NUOXDRDTASE4"/>
</dbReference>
<comment type="function">
    <text evidence="1">Core subunit of the mitochondrial membrane respiratory chain NADH dehydrogenase (Complex I) that is believed to belong to the minimal assembly required for catalysis. Complex I functions in the transfer of electrons from NADH to the respiratory chain. The immediate electron acceptor for the enzyme is believed to be ubiquinone (By similarity).</text>
</comment>
<comment type="catalytic activity">
    <reaction>
        <text>a ubiquinone + NADH + 5 H(+)(in) = a ubiquinol + NAD(+) + 4 H(+)(out)</text>
        <dbReference type="Rhea" id="RHEA:29091"/>
        <dbReference type="Rhea" id="RHEA-COMP:9565"/>
        <dbReference type="Rhea" id="RHEA-COMP:9566"/>
        <dbReference type="ChEBI" id="CHEBI:15378"/>
        <dbReference type="ChEBI" id="CHEBI:16389"/>
        <dbReference type="ChEBI" id="CHEBI:17976"/>
        <dbReference type="ChEBI" id="CHEBI:57540"/>
        <dbReference type="ChEBI" id="CHEBI:57945"/>
        <dbReference type="EC" id="7.1.1.2"/>
    </reaction>
</comment>
<comment type="subcellular location">
    <subcellularLocation>
        <location evidence="1">Mitochondrion membrane</location>
        <topology evidence="1">Multi-pass membrane protein</topology>
    </subcellularLocation>
</comment>
<comment type="similarity">
    <text evidence="3">Belongs to the complex I subunit 4 family.</text>
</comment>
<proteinExistence type="inferred from homology"/>
<organism>
    <name type="scientific">Ceratitis capitata</name>
    <name type="common">Mediterranean fruit fly</name>
    <name type="synonym">Tephritis capitata</name>
    <dbReference type="NCBI Taxonomy" id="7213"/>
    <lineage>
        <taxon>Eukaryota</taxon>
        <taxon>Metazoa</taxon>
        <taxon>Ecdysozoa</taxon>
        <taxon>Arthropoda</taxon>
        <taxon>Hexapoda</taxon>
        <taxon>Insecta</taxon>
        <taxon>Pterygota</taxon>
        <taxon>Neoptera</taxon>
        <taxon>Endopterygota</taxon>
        <taxon>Diptera</taxon>
        <taxon>Brachycera</taxon>
        <taxon>Muscomorpha</taxon>
        <taxon>Tephritoidea</taxon>
        <taxon>Tephritidae</taxon>
        <taxon>Ceratitis</taxon>
        <taxon>Ceratitis</taxon>
    </lineage>
</organism>
<feature type="chain" id="PRO_0000117917" description="NADH-ubiquinone oxidoreductase chain 4">
    <location>
        <begin position="1"/>
        <end position="446"/>
    </location>
</feature>
<feature type="transmembrane region" description="Helical" evidence="2">
    <location>
        <begin position="4"/>
        <end position="24"/>
    </location>
</feature>
<feature type="transmembrane region" description="Helical" evidence="2">
    <location>
        <begin position="28"/>
        <end position="48"/>
    </location>
</feature>
<feature type="transmembrane region" description="Helical" evidence="2">
    <location>
        <begin position="56"/>
        <end position="76"/>
    </location>
</feature>
<feature type="transmembrane region" description="Helical" evidence="2">
    <location>
        <begin position="88"/>
        <end position="105"/>
    </location>
</feature>
<feature type="transmembrane region" description="Helical" evidence="2">
    <location>
        <begin position="109"/>
        <end position="131"/>
    </location>
</feature>
<feature type="transmembrane region" description="Helical" evidence="2">
    <location>
        <begin position="141"/>
        <end position="161"/>
    </location>
</feature>
<feature type="transmembrane region" description="Helical" evidence="2">
    <location>
        <begin position="182"/>
        <end position="202"/>
    </location>
</feature>
<feature type="transmembrane region" description="Helical" evidence="2">
    <location>
        <begin position="218"/>
        <end position="238"/>
    </location>
</feature>
<feature type="transmembrane region" description="Helical" evidence="2">
    <location>
        <begin position="245"/>
        <end position="265"/>
    </location>
</feature>
<feature type="transmembrane region" description="Helical" evidence="2">
    <location>
        <begin position="272"/>
        <end position="292"/>
    </location>
</feature>
<feature type="transmembrane region" description="Helical" evidence="2">
    <location>
        <begin position="297"/>
        <end position="317"/>
    </location>
</feature>
<feature type="transmembrane region" description="Helical" evidence="2">
    <location>
        <begin position="330"/>
        <end position="350"/>
    </location>
</feature>
<feature type="transmembrane region" description="Helical" evidence="2">
    <location>
        <begin position="373"/>
        <end position="393"/>
    </location>
</feature>
<feature type="transmembrane region" description="Helical" evidence="2">
    <location>
        <begin position="426"/>
        <end position="446"/>
    </location>
</feature>
<sequence>MLKLILMMIFISPICFMQGLFWMVHNLLFVITFVLILMNFCLNYFVNISYFMGFDVLSYGLILLSFWICSLMIVASESVNKYNNYKNLFLFNVLMLLIFLVLTFSSMNLFMFYLFFESSLIPTLFLILGWGYQPERLQAGVYLLFYTLLVSLPLLVGIFYLYKNCNTMNFYLLSNYMFNCNLLYLAMILAFLVKMPMFLVHLWLPKAHVEAPVSGSMILAGIMLKLGGYGLLAVFSFLQLIGLKYNYIWVSISLIGGVLISLVCLRQTDLKALIAYSSVAHMGIVLGGLMTLSYWGLSGSYTLMIGHGLCSSGLFCLANITYERLGSRSLLINKGLLNFMPSMTLWWFLLSVCNMAAPPSLNLLGEISLLNSIVSWSWLTMISLSFLSFFSAAYTLYLYAYSQHGKIFSGVYSFSGGNIREYFLLFLHWFPLNLLILKSEVCLFWI</sequence>
<reference key="1">
    <citation type="journal article" date="1995" name="Insect Mol. Biol.">
        <title>Analysis of mitochondrial DNA and development of PCR-based diagnostic molecular markers for Mediterranean fruit fly (Ceratitis capitata) populations.</title>
        <authorList>
            <person name="Gasparich G.E."/>
            <person name="Sheppard W.S."/>
            <person name="Han H.Y."/>
            <person name="McPheron B.A."/>
            <person name="Steck G.J."/>
        </authorList>
    </citation>
    <scope>NUCLEOTIDE SEQUENCE [GENOMIC DNA]</scope>
    <source>
        <strain>Guatemala laboratory colony</strain>
        <strain>Hawaii laboratory colony</strain>
    </source>
</reference>